<name>EPG5_AEDAE</name>
<proteinExistence type="inferred from homology"/>
<keyword id="KW-0072">Autophagy</keyword>
<keyword id="KW-1185">Reference proteome</keyword>
<accession>Q0IEK6</accession>
<sequence>MVPLSGEQLAQFYRVDGEMALAEAFEKEFLTRELQENDQCMNHPLYQLLQRYAKARAEFSLNVLEFEALRRKCKALANELWTVREQTFAGTGTCGDGKVVHASHISSVAALQESALADFSSNLQDLMKQSFFQCSQSTYEVDATRIKIEQKIYETLNLHPVLSNLPADSPVVLNPPIDAMQLTAAIGELRLCISILFAFLRKGITDKRFLADVRGWTVKLVATQLRIATVHDHLFVLFHVLRSPSGIANWATSLVQLPTEQDLRWGSSEFQHILVVMACILLPIKKRNEFLEKLKLDMNRSIDVVQEEMWAIVDSDGEDCSGSDSISELKEGDLVALIDQIPFGMVFRALTLVDRKLDGTWRLGEDQVRGTHVMKAIAFGTIFVELLGNGLMTYNADRYRQFAKRVARLIKHTVYYVSDLYRILLERTRSVQVVLDDYETTRINLELDVFVVRAAQYIYRSRKIGTWQYLSGFPFDQLSVGALWKLYYFLHLDEFNEELITAVGTDFRDLCIGPNQREKFRNGLVGMPSEDLYYLLQVFSNMALAREIDDFEFIETVALNLFDIGYLNEYTKDFCYKAVKDLLFNIVYKHPSLVSSLLQYMKQDVAQADHSALYVFKSLPLDRWRPQWDDFELLANWILNYGFDAVQSSTARVILIHLNYNFDSNNELFLPHDIHVRIACLITEIYSKHVPELLGNPQGLVASVSSLVKNKTAQDQFLAWCWNMVSLLRLHCMDQSPTVINGMMKNPALILRYVLELERAQQIYQGVTENRPLAIYLAILISTWGHSVPQICHQGFEQIRLLLNDHRYVVVVRCLQLITPLFLECPDSLSHCESFKSILISLMAADKYYARFTKDQFKPESNSPCLTELPNWTKDPAIIGLLDAMAGVAYQFPDAWHSMKEFFRPYFSVSSIILHSPSSATVFLSIFTLELEYELTEIQSGIWHEVIRGIGLPSSPKLTIETAIKKSTSILGYPSFPPSSLAVFKLANLVANCTIKNFMYPIVCQLFFTIYLSRLPLSTEEQRFANCFGVSDQIYECNVGLMKRIKKQLYDAECFYNSASVSESDERQRSFYNHCTRLFKTFQLWLEDTQLNKISTNAVNLPPQFDRYRLAAIFRGNRDHWTDFIDFRGIRSDHRDLADAWQKLCYRYKPEVSTVATNSPARSLASSHSVTDLQDFKQSIFKRLETYDAPAPAPLVFKPTPLIPPAKFTTQSSNSFLVMYNEHLLLDSFYLEQVPKLYIVEDKVLYKDASCSNGCTESRKVLVRYKVSKLDKNLSAVLRENRSAHEALLQRESKLPDRIVMASVRIDAFLRQIVEAYREFKLSGETNVCAKLNKVGSTLFYEFVGKMNDYNQLCPLTKDVCSLGISQLGFFMRENQNDEGIKLLNITLGRPEMISLLSELLVPASCPPQFFLRMYEFVIDSHIKRHDTQVLFVMLSKFDIIAWMNRYRPKLVDVRRLVELILRGLEGWTQKNAVLIQDLLQRHLMHLFEFDFPEYYGDILQMVLAACSLKKIMAQVLLELLNSMRRRVECQPLTFGLGLVSIKEDFRSFATKQKILSYKDLIDTTVLLTQHFQQERLNHGLHGLYPVHSDYCEVLSLLLGSVGHATVVAAVHAYPGVLADELINWLWPPLCDMFSPWLTPYFPQNMKGQQQVANWIQQVASDSSILPPWSELHSETAFRMVKVFEHCIQYLMDTFPSSSALLGHLFSWYELNFAHPALPRHVAVPIHTNLMNLAWDRFRPAPVHITGFSRILQQFIPEAHKFVGHIFIRIAWTPWLQQNIQSWDYQLRYQMLSALLMIFIKISYEPNAREGLKIVTLLQEACNYPWHMLEYQGVEAVLDWFVLSAEPSVVLKMPSESEVVDSAVLDLLQVASSMKFNSGNPLESTALQSQVQAKRILYVRTTVRLLNSCGAKYQKLLGTKQGVQAFHNAVLGLFNIVETVLLQIRSTKDREFEARNLIGEVIVSLQSQGEYTSKLFTEAIVLWTENCRTSDSYIVPSVLDAVGMCKSFSLNLYLLLEEMLFHYFGKSWHGQVNDGGDPVLDASWVKALHKVGLQTVKGFDEEMLVKHRCLLVLHLLTVQKLRTAGSSGERIVVLQKLFQLLENVKVSDQTESKLILLWSLMAVVGVEIMKASSNGQNHLLTLARYLQTCSKDAEGWGEGLLGAIGIRKDGISIRRKVVAKCLSCIVFLLFGEDSGEALEASESGPPSIDCANRCKEYDQAMGDLKQTLTNKRYGDMHIKTRAAINLVENTAMIANIGENVCKIVRLFCDEHFFHSVEEVWRC</sequence>
<organism>
    <name type="scientific">Aedes aegypti</name>
    <name type="common">Yellowfever mosquito</name>
    <name type="synonym">Culex aegypti</name>
    <dbReference type="NCBI Taxonomy" id="7159"/>
    <lineage>
        <taxon>Eukaryota</taxon>
        <taxon>Metazoa</taxon>
        <taxon>Ecdysozoa</taxon>
        <taxon>Arthropoda</taxon>
        <taxon>Hexapoda</taxon>
        <taxon>Insecta</taxon>
        <taxon>Pterygota</taxon>
        <taxon>Neoptera</taxon>
        <taxon>Endopterygota</taxon>
        <taxon>Diptera</taxon>
        <taxon>Nematocera</taxon>
        <taxon>Culicoidea</taxon>
        <taxon>Culicidae</taxon>
        <taxon>Culicinae</taxon>
        <taxon>Aedini</taxon>
        <taxon>Aedes</taxon>
        <taxon>Stegomyia</taxon>
    </lineage>
</organism>
<protein>
    <recommendedName>
        <fullName>Ectopic P granules protein 5 homolog</fullName>
    </recommendedName>
</protein>
<reference key="1">
    <citation type="journal article" date="2007" name="Science">
        <title>Genome sequence of Aedes aegypti, a major arbovirus vector.</title>
        <authorList>
            <person name="Nene V."/>
            <person name="Wortman J.R."/>
            <person name="Lawson D."/>
            <person name="Haas B.J."/>
            <person name="Kodira C.D."/>
            <person name="Tu Z.J."/>
            <person name="Loftus B.J."/>
            <person name="Xi Z."/>
            <person name="Megy K."/>
            <person name="Grabherr M."/>
            <person name="Ren Q."/>
            <person name="Zdobnov E.M."/>
            <person name="Lobo N.F."/>
            <person name="Campbell K.S."/>
            <person name="Brown S.E."/>
            <person name="Bonaldo M.F."/>
            <person name="Zhu J."/>
            <person name="Sinkins S.P."/>
            <person name="Hogenkamp D.G."/>
            <person name="Amedeo P."/>
            <person name="Arensburger P."/>
            <person name="Atkinson P.W."/>
            <person name="Bidwell S.L."/>
            <person name="Biedler J."/>
            <person name="Birney E."/>
            <person name="Bruggner R.V."/>
            <person name="Costas J."/>
            <person name="Coy M.R."/>
            <person name="Crabtree J."/>
            <person name="Crawford M."/>
            <person name="DeBruyn B."/>
            <person name="DeCaprio D."/>
            <person name="Eiglmeier K."/>
            <person name="Eisenstadt E."/>
            <person name="El-Dorry H."/>
            <person name="Gelbart W.M."/>
            <person name="Gomes S.L."/>
            <person name="Hammond M."/>
            <person name="Hannick L.I."/>
            <person name="Hogan J.R."/>
            <person name="Holmes M.H."/>
            <person name="Jaffe D."/>
            <person name="Johnston S.J."/>
            <person name="Kennedy R.C."/>
            <person name="Koo H."/>
            <person name="Kravitz S."/>
            <person name="Kriventseva E.V."/>
            <person name="Kulp D."/>
            <person name="Labutti K."/>
            <person name="Lee E."/>
            <person name="Li S."/>
            <person name="Lovin D.D."/>
            <person name="Mao C."/>
            <person name="Mauceli E."/>
            <person name="Menck C.F."/>
            <person name="Miller J.R."/>
            <person name="Montgomery P."/>
            <person name="Mori A."/>
            <person name="Nascimento A.L."/>
            <person name="Naveira H.F."/>
            <person name="Nusbaum C."/>
            <person name="O'Leary S.B."/>
            <person name="Orvis J."/>
            <person name="Pertea M."/>
            <person name="Quesneville H."/>
            <person name="Reidenbach K.R."/>
            <person name="Rogers Y.-H.C."/>
            <person name="Roth C.W."/>
            <person name="Schneider J.R."/>
            <person name="Schatz M."/>
            <person name="Shumway M."/>
            <person name="Stanke M."/>
            <person name="Stinson E.O."/>
            <person name="Tubio J.M.C."/>
            <person name="Vanzee J.P."/>
            <person name="Verjovski-Almeida S."/>
            <person name="Werner D."/>
            <person name="White O.R."/>
            <person name="Wyder S."/>
            <person name="Zeng Q."/>
            <person name="Zhao Q."/>
            <person name="Zhao Y."/>
            <person name="Hill C.A."/>
            <person name="Raikhel A.S."/>
            <person name="Soares M.B."/>
            <person name="Knudson D.L."/>
            <person name="Lee N.H."/>
            <person name="Galagan J."/>
            <person name="Salzberg S.L."/>
            <person name="Paulsen I.T."/>
            <person name="Dimopoulos G."/>
            <person name="Collins F.H."/>
            <person name="Bruce B."/>
            <person name="Fraser-Liggett C.M."/>
            <person name="Severson D.W."/>
        </authorList>
    </citation>
    <scope>NUCLEOTIDE SEQUENCE [LARGE SCALE GENOMIC DNA]</scope>
    <source>
        <strain>LVPib12</strain>
    </source>
</reference>
<gene>
    <name type="ORF">AAEL009648</name>
</gene>
<dbReference type="EMBL" id="CH477600">
    <property type="protein sequence ID" value="EAT38457.1"/>
    <property type="molecule type" value="Genomic_DNA"/>
</dbReference>
<dbReference type="RefSeq" id="XP_001653908.1">
    <property type="nucleotide sequence ID" value="XM_001653858.1"/>
</dbReference>
<dbReference type="FunCoup" id="Q0IEK6">
    <property type="interactions" value="1957"/>
</dbReference>
<dbReference type="STRING" id="7159.Q0IEK6"/>
<dbReference type="PaxDb" id="7159-AAEL009648-PB"/>
<dbReference type="VEuPathDB" id="VectorBase:AAEL026253"/>
<dbReference type="eggNOG" id="KOG3622">
    <property type="taxonomic scope" value="Eukaryota"/>
</dbReference>
<dbReference type="InParanoid" id="Q0IEK6"/>
<dbReference type="OMA" id="LYCYEAE"/>
<dbReference type="PhylomeDB" id="Q0IEK6"/>
<dbReference type="Proteomes" id="UP000008820">
    <property type="component" value="Unassembled WGS sequence"/>
</dbReference>
<dbReference type="Proteomes" id="UP000682892">
    <property type="component" value="Unassembled WGS sequence"/>
</dbReference>
<dbReference type="GO" id="GO:0005737">
    <property type="term" value="C:cytoplasm"/>
    <property type="evidence" value="ECO:0007669"/>
    <property type="project" value="TreeGrafter"/>
</dbReference>
<dbReference type="GO" id="GO:0097352">
    <property type="term" value="P:autophagosome maturation"/>
    <property type="evidence" value="ECO:0007669"/>
    <property type="project" value="TreeGrafter"/>
</dbReference>
<dbReference type="InterPro" id="IPR051436">
    <property type="entry name" value="Autophagy-related_EPG5"/>
</dbReference>
<dbReference type="PANTHER" id="PTHR31139">
    <property type="entry name" value="ECTOPIC P GRANULES PROTEIN 5 HOMOLOG"/>
    <property type="match status" value="1"/>
</dbReference>
<dbReference type="PANTHER" id="PTHR31139:SF4">
    <property type="entry name" value="ECTOPIC P GRANULES PROTEIN 5 HOMOLOG"/>
    <property type="match status" value="1"/>
</dbReference>
<comment type="function">
    <text evidence="1">Involved in autophagy.</text>
</comment>
<comment type="similarity">
    <text evidence="2">Belongs to the EPG5 family.</text>
</comment>
<feature type="chain" id="PRO_0000306258" description="Ectopic P granules protein 5 homolog">
    <location>
        <begin position="1"/>
        <end position="2282"/>
    </location>
</feature>
<evidence type="ECO:0000250" key="1"/>
<evidence type="ECO:0000305" key="2"/>